<gene>
    <name evidence="1" type="primary">rplV</name>
    <name type="ordered locus">SNSL254_A3704</name>
</gene>
<sequence>METIAKHRHARSSAQKVRLVADLIRGKKVSQALDILTYTNKKAAVLVKKVLESAIANAEHNDGADIDDLKVTKIFVDEGPSMKRIMPRAKGRADRILKRTSHITVVVSDR</sequence>
<proteinExistence type="inferred from homology"/>
<protein>
    <recommendedName>
        <fullName evidence="1">Large ribosomal subunit protein uL22</fullName>
    </recommendedName>
    <alternativeName>
        <fullName evidence="2">50S ribosomal protein L22</fullName>
    </alternativeName>
</protein>
<accession>B4SUT5</accession>
<reference key="1">
    <citation type="journal article" date="2011" name="J. Bacteriol.">
        <title>Comparative genomics of 28 Salmonella enterica isolates: evidence for CRISPR-mediated adaptive sublineage evolution.</title>
        <authorList>
            <person name="Fricke W.F."/>
            <person name="Mammel M.K."/>
            <person name="McDermott P.F."/>
            <person name="Tartera C."/>
            <person name="White D.G."/>
            <person name="Leclerc J.E."/>
            <person name="Ravel J."/>
            <person name="Cebula T.A."/>
        </authorList>
    </citation>
    <scope>NUCLEOTIDE SEQUENCE [LARGE SCALE GENOMIC DNA]</scope>
    <source>
        <strain>SL254</strain>
    </source>
</reference>
<dbReference type="EMBL" id="CP001113">
    <property type="protein sequence ID" value="ACF62906.1"/>
    <property type="molecule type" value="Genomic_DNA"/>
</dbReference>
<dbReference type="RefSeq" id="WP_000447529.1">
    <property type="nucleotide sequence ID" value="NZ_CCMR01000003.1"/>
</dbReference>
<dbReference type="SMR" id="B4SUT5"/>
<dbReference type="GeneID" id="93778672"/>
<dbReference type="KEGG" id="see:SNSL254_A3704"/>
<dbReference type="HOGENOM" id="CLU_083987_3_3_6"/>
<dbReference type="Proteomes" id="UP000008824">
    <property type="component" value="Chromosome"/>
</dbReference>
<dbReference type="GO" id="GO:0022625">
    <property type="term" value="C:cytosolic large ribosomal subunit"/>
    <property type="evidence" value="ECO:0007669"/>
    <property type="project" value="TreeGrafter"/>
</dbReference>
<dbReference type="GO" id="GO:0019843">
    <property type="term" value="F:rRNA binding"/>
    <property type="evidence" value="ECO:0007669"/>
    <property type="project" value="UniProtKB-UniRule"/>
</dbReference>
<dbReference type="GO" id="GO:0003735">
    <property type="term" value="F:structural constituent of ribosome"/>
    <property type="evidence" value="ECO:0007669"/>
    <property type="project" value="InterPro"/>
</dbReference>
<dbReference type="GO" id="GO:0006412">
    <property type="term" value="P:translation"/>
    <property type="evidence" value="ECO:0007669"/>
    <property type="project" value="UniProtKB-UniRule"/>
</dbReference>
<dbReference type="CDD" id="cd00336">
    <property type="entry name" value="Ribosomal_L22"/>
    <property type="match status" value="1"/>
</dbReference>
<dbReference type="FunFam" id="3.90.470.10:FF:000001">
    <property type="entry name" value="50S ribosomal protein L22"/>
    <property type="match status" value="1"/>
</dbReference>
<dbReference type="Gene3D" id="3.90.470.10">
    <property type="entry name" value="Ribosomal protein L22/L17"/>
    <property type="match status" value="1"/>
</dbReference>
<dbReference type="HAMAP" id="MF_01331_B">
    <property type="entry name" value="Ribosomal_uL22_B"/>
    <property type="match status" value="1"/>
</dbReference>
<dbReference type="InterPro" id="IPR001063">
    <property type="entry name" value="Ribosomal_uL22"/>
</dbReference>
<dbReference type="InterPro" id="IPR005727">
    <property type="entry name" value="Ribosomal_uL22_bac/chlpt-type"/>
</dbReference>
<dbReference type="InterPro" id="IPR047867">
    <property type="entry name" value="Ribosomal_uL22_bac/org-type"/>
</dbReference>
<dbReference type="InterPro" id="IPR018260">
    <property type="entry name" value="Ribosomal_uL22_CS"/>
</dbReference>
<dbReference type="InterPro" id="IPR036394">
    <property type="entry name" value="Ribosomal_uL22_sf"/>
</dbReference>
<dbReference type="NCBIfam" id="TIGR01044">
    <property type="entry name" value="rplV_bact"/>
    <property type="match status" value="1"/>
</dbReference>
<dbReference type="PANTHER" id="PTHR13501">
    <property type="entry name" value="CHLOROPLAST 50S RIBOSOMAL PROTEIN L22-RELATED"/>
    <property type="match status" value="1"/>
</dbReference>
<dbReference type="PANTHER" id="PTHR13501:SF8">
    <property type="entry name" value="LARGE RIBOSOMAL SUBUNIT PROTEIN UL22M"/>
    <property type="match status" value="1"/>
</dbReference>
<dbReference type="Pfam" id="PF00237">
    <property type="entry name" value="Ribosomal_L22"/>
    <property type="match status" value="1"/>
</dbReference>
<dbReference type="SUPFAM" id="SSF54843">
    <property type="entry name" value="Ribosomal protein L22"/>
    <property type="match status" value="1"/>
</dbReference>
<dbReference type="PROSITE" id="PS00464">
    <property type="entry name" value="RIBOSOMAL_L22"/>
    <property type="match status" value="1"/>
</dbReference>
<evidence type="ECO:0000255" key="1">
    <source>
        <dbReference type="HAMAP-Rule" id="MF_01331"/>
    </source>
</evidence>
<evidence type="ECO:0000305" key="2"/>
<feature type="chain" id="PRO_1000142306" description="Large ribosomal subunit protein uL22">
    <location>
        <begin position="1"/>
        <end position="110"/>
    </location>
</feature>
<keyword id="KW-0687">Ribonucleoprotein</keyword>
<keyword id="KW-0689">Ribosomal protein</keyword>
<keyword id="KW-0694">RNA-binding</keyword>
<keyword id="KW-0699">rRNA-binding</keyword>
<name>RL22_SALNS</name>
<comment type="function">
    <text evidence="1">This protein binds specifically to 23S rRNA; its binding is stimulated by other ribosomal proteins, e.g. L4, L17, and L20. It is important during the early stages of 50S assembly. It makes multiple contacts with different domains of the 23S rRNA in the assembled 50S subunit and ribosome (By similarity).</text>
</comment>
<comment type="function">
    <text evidence="1">The globular domain of the protein is located near the polypeptide exit tunnel on the outside of the subunit, while an extended beta-hairpin is found that lines the wall of the exit tunnel in the center of the 70S ribosome.</text>
</comment>
<comment type="subunit">
    <text evidence="1">Part of the 50S ribosomal subunit.</text>
</comment>
<comment type="similarity">
    <text evidence="1">Belongs to the universal ribosomal protein uL22 family.</text>
</comment>
<organism>
    <name type="scientific">Salmonella newport (strain SL254)</name>
    <dbReference type="NCBI Taxonomy" id="423368"/>
    <lineage>
        <taxon>Bacteria</taxon>
        <taxon>Pseudomonadati</taxon>
        <taxon>Pseudomonadota</taxon>
        <taxon>Gammaproteobacteria</taxon>
        <taxon>Enterobacterales</taxon>
        <taxon>Enterobacteriaceae</taxon>
        <taxon>Salmonella</taxon>
    </lineage>
</organism>